<dbReference type="EMBL" id="BA000028">
    <property type="protein sequence ID" value="BAC12087.1"/>
    <property type="molecule type" value="Genomic_DNA"/>
</dbReference>
<dbReference type="RefSeq" id="WP_011064534.1">
    <property type="nucleotide sequence ID" value="NC_004193.1"/>
</dbReference>
<dbReference type="SMR" id="Q8ETX1"/>
<dbReference type="STRING" id="221109.gene:10732321"/>
<dbReference type="KEGG" id="oih:OB0131"/>
<dbReference type="eggNOG" id="COG0094">
    <property type="taxonomic scope" value="Bacteria"/>
</dbReference>
<dbReference type="HOGENOM" id="CLU_061015_2_1_9"/>
<dbReference type="OrthoDB" id="9806626at2"/>
<dbReference type="PhylomeDB" id="Q8ETX1"/>
<dbReference type="Proteomes" id="UP000000822">
    <property type="component" value="Chromosome"/>
</dbReference>
<dbReference type="GO" id="GO:1990904">
    <property type="term" value="C:ribonucleoprotein complex"/>
    <property type="evidence" value="ECO:0007669"/>
    <property type="project" value="UniProtKB-KW"/>
</dbReference>
<dbReference type="GO" id="GO:0005840">
    <property type="term" value="C:ribosome"/>
    <property type="evidence" value="ECO:0007669"/>
    <property type="project" value="UniProtKB-KW"/>
</dbReference>
<dbReference type="GO" id="GO:0019843">
    <property type="term" value="F:rRNA binding"/>
    <property type="evidence" value="ECO:0007669"/>
    <property type="project" value="UniProtKB-UniRule"/>
</dbReference>
<dbReference type="GO" id="GO:0003735">
    <property type="term" value="F:structural constituent of ribosome"/>
    <property type="evidence" value="ECO:0007669"/>
    <property type="project" value="InterPro"/>
</dbReference>
<dbReference type="GO" id="GO:0000049">
    <property type="term" value="F:tRNA binding"/>
    <property type="evidence" value="ECO:0007669"/>
    <property type="project" value="UniProtKB-UniRule"/>
</dbReference>
<dbReference type="GO" id="GO:0006412">
    <property type="term" value="P:translation"/>
    <property type="evidence" value="ECO:0007669"/>
    <property type="project" value="UniProtKB-UniRule"/>
</dbReference>
<dbReference type="FunFam" id="3.30.1440.10:FF:000001">
    <property type="entry name" value="50S ribosomal protein L5"/>
    <property type="match status" value="1"/>
</dbReference>
<dbReference type="Gene3D" id="3.30.1440.10">
    <property type="match status" value="1"/>
</dbReference>
<dbReference type="HAMAP" id="MF_01333_B">
    <property type="entry name" value="Ribosomal_uL5_B"/>
    <property type="match status" value="1"/>
</dbReference>
<dbReference type="InterPro" id="IPR002132">
    <property type="entry name" value="Ribosomal_uL5"/>
</dbReference>
<dbReference type="InterPro" id="IPR020930">
    <property type="entry name" value="Ribosomal_uL5_bac-type"/>
</dbReference>
<dbReference type="InterPro" id="IPR031309">
    <property type="entry name" value="Ribosomal_uL5_C"/>
</dbReference>
<dbReference type="InterPro" id="IPR020929">
    <property type="entry name" value="Ribosomal_uL5_CS"/>
</dbReference>
<dbReference type="InterPro" id="IPR022803">
    <property type="entry name" value="Ribosomal_uL5_dom_sf"/>
</dbReference>
<dbReference type="InterPro" id="IPR031310">
    <property type="entry name" value="Ribosomal_uL5_N"/>
</dbReference>
<dbReference type="NCBIfam" id="NF000585">
    <property type="entry name" value="PRK00010.1"/>
    <property type="match status" value="1"/>
</dbReference>
<dbReference type="PANTHER" id="PTHR11994">
    <property type="entry name" value="60S RIBOSOMAL PROTEIN L11-RELATED"/>
    <property type="match status" value="1"/>
</dbReference>
<dbReference type="Pfam" id="PF00281">
    <property type="entry name" value="Ribosomal_L5"/>
    <property type="match status" value="1"/>
</dbReference>
<dbReference type="Pfam" id="PF00673">
    <property type="entry name" value="Ribosomal_L5_C"/>
    <property type="match status" value="1"/>
</dbReference>
<dbReference type="PIRSF" id="PIRSF002161">
    <property type="entry name" value="Ribosomal_L5"/>
    <property type="match status" value="1"/>
</dbReference>
<dbReference type="SUPFAM" id="SSF55282">
    <property type="entry name" value="RL5-like"/>
    <property type="match status" value="1"/>
</dbReference>
<dbReference type="PROSITE" id="PS00358">
    <property type="entry name" value="RIBOSOMAL_L5"/>
    <property type="match status" value="1"/>
</dbReference>
<sequence length="179" mass="20150">MNELKQKYQDEIVSSLMDKFNYNSVMEVPKVEKIVINMGVGDAVQNSKALDSAVEELSLISGQKPMITRAKKSIAGFRLREGMPIGAKVTLRGERMYEFLQKLVAVSLPRVRDFRGISKKAFDGRGNYTLGVKEQLIFPEINYDKVSKIRGMDIVVVTTSNTDEEARELLAQLGMPFQK</sequence>
<gene>
    <name evidence="1" type="primary">rplE</name>
    <name type="ordered locus">OB0131</name>
</gene>
<keyword id="KW-1185">Reference proteome</keyword>
<keyword id="KW-0687">Ribonucleoprotein</keyword>
<keyword id="KW-0689">Ribosomal protein</keyword>
<keyword id="KW-0694">RNA-binding</keyword>
<keyword id="KW-0699">rRNA-binding</keyword>
<keyword id="KW-0820">tRNA-binding</keyword>
<feature type="chain" id="PRO_0000124960" description="Large ribosomal subunit protein uL5">
    <location>
        <begin position="1"/>
        <end position="179"/>
    </location>
</feature>
<accession>Q8ETX1</accession>
<organism>
    <name type="scientific">Oceanobacillus iheyensis (strain DSM 14371 / CIP 107618 / JCM 11309 / KCTC 3954 / HTE831)</name>
    <dbReference type="NCBI Taxonomy" id="221109"/>
    <lineage>
        <taxon>Bacteria</taxon>
        <taxon>Bacillati</taxon>
        <taxon>Bacillota</taxon>
        <taxon>Bacilli</taxon>
        <taxon>Bacillales</taxon>
        <taxon>Bacillaceae</taxon>
        <taxon>Oceanobacillus</taxon>
    </lineage>
</organism>
<name>RL5_OCEIH</name>
<comment type="function">
    <text evidence="1">This is one of the proteins that bind and probably mediate the attachment of the 5S RNA into the large ribosomal subunit, where it forms part of the central protuberance. In the 70S ribosome it contacts protein S13 of the 30S subunit (bridge B1b), connecting the 2 subunits; this bridge is implicated in subunit movement. Contacts the P site tRNA; the 5S rRNA and some of its associated proteins might help stabilize positioning of ribosome-bound tRNAs.</text>
</comment>
<comment type="subunit">
    <text evidence="1">Part of the 50S ribosomal subunit; part of the 5S rRNA/L5/L18/L25 subcomplex. Contacts the 5S rRNA and the P site tRNA. Forms a bridge to the 30S subunit in the 70S ribosome.</text>
</comment>
<comment type="similarity">
    <text evidence="1">Belongs to the universal ribosomal protein uL5 family.</text>
</comment>
<proteinExistence type="inferred from homology"/>
<evidence type="ECO:0000255" key="1">
    <source>
        <dbReference type="HAMAP-Rule" id="MF_01333"/>
    </source>
</evidence>
<evidence type="ECO:0000305" key="2"/>
<protein>
    <recommendedName>
        <fullName evidence="1">Large ribosomal subunit protein uL5</fullName>
    </recommendedName>
    <alternativeName>
        <fullName evidence="2">50S ribosomal protein L5</fullName>
    </alternativeName>
</protein>
<reference key="1">
    <citation type="journal article" date="2002" name="Nucleic Acids Res.">
        <title>Genome sequence of Oceanobacillus iheyensis isolated from the Iheya Ridge and its unexpected adaptive capabilities to extreme environments.</title>
        <authorList>
            <person name="Takami H."/>
            <person name="Takaki Y."/>
            <person name="Uchiyama I."/>
        </authorList>
    </citation>
    <scope>NUCLEOTIDE SEQUENCE [LARGE SCALE GENOMIC DNA]</scope>
    <source>
        <strain>DSM 14371 / CIP 107618 / JCM 11309 / KCTC 3954 / HTE831</strain>
    </source>
</reference>